<sequence length="450" mass="50312">MSTHVTFDYSKALSFIGEHEITYLRDAVKVTHHAIHEKTGAGNDFLGWVDLPLQYDKEEFARIQKCAEKIKNDSDILLVVGIGGSYLGARAAIEMLNHSFYNTLSKEQRKTPQVLFVGQNISSTYMKDLMDVLEGKDFSINVISKSGTTTEPALAFRIFRKLLEEKYGKEEARKRIYATTDKARGALKTLADNEGYETFVIPDDVGGRFSVLTPVGLLPIAVSGLNIEEMMKGAAAGHDDFGTSELEENPAYQYAVVRNALYNKGKTIEMLVNYEPALQYFAEWWKQLFGESEGKDQKGIFPSSANFSTDLHSLGQYVQEGRRDLFETVLKVGKSTHELTIESEENDLDGLNYLAGETVDFVNTKAYEGTLLAHSDGGVPNLIVNIPELNEYTFGYLVYFFEKACAMSGYLLGVNPFDQPGVEAYKKNMFALLGKPGFEELKAELEERLK</sequence>
<dbReference type="EC" id="5.3.1.9" evidence="1"/>
<dbReference type="EMBL" id="CP001186">
    <property type="protein sequence ID" value="ACK97133.1"/>
    <property type="molecule type" value="Genomic_DNA"/>
</dbReference>
<dbReference type="RefSeq" id="WP_000103654.1">
    <property type="nucleotide sequence ID" value="NC_011772.1"/>
</dbReference>
<dbReference type="SMR" id="B7IMR7"/>
<dbReference type="KEGG" id="bcg:BCG9842_B0204"/>
<dbReference type="HOGENOM" id="CLU_037303_0_1_9"/>
<dbReference type="UniPathway" id="UPA00109">
    <property type="reaction ID" value="UER00181"/>
</dbReference>
<dbReference type="UniPathway" id="UPA00138"/>
<dbReference type="Proteomes" id="UP000006744">
    <property type="component" value="Chromosome"/>
</dbReference>
<dbReference type="GO" id="GO:0005829">
    <property type="term" value="C:cytosol"/>
    <property type="evidence" value="ECO:0007669"/>
    <property type="project" value="TreeGrafter"/>
</dbReference>
<dbReference type="GO" id="GO:0097367">
    <property type="term" value="F:carbohydrate derivative binding"/>
    <property type="evidence" value="ECO:0007669"/>
    <property type="project" value="InterPro"/>
</dbReference>
<dbReference type="GO" id="GO:0004347">
    <property type="term" value="F:glucose-6-phosphate isomerase activity"/>
    <property type="evidence" value="ECO:0007669"/>
    <property type="project" value="UniProtKB-UniRule"/>
</dbReference>
<dbReference type="GO" id="GO:0048029">
    <property type="term" value="F:monosaccharide binding"/>
    <property type="evidence" value="ECO:0007669"/>
    <property type="project" value="TreeGrafter"/>
</dbReference>
<dbReference type="GO" id="GO:0006094">
    <property type="term" value="P:gluconeogenesis"/>
    <property type="evidence" value="ECO:0007669"/>
    <property type="project" value="UniProtKB-UniRule"/>
</dbReference>
<dbReference type="GO" id="GO:0051156">
    <property type="term" value="P:glucose 6-phosphate metabolic process"/>
    <property type="evidence" value="ECO:0007669"/>
    <property type="project" value="TreeGrafter"/>
</dbReference>
<dbReference type="GO" id="GO:0006096">
    <property type="term" value="P:glycolytic process"/>
    <property type="evidence" value="ECO:0007669"/>
    <property type="project" value="UniProtKB-UniRule"/>
</dbReference>
<dbReference type="CDD" id="cd05015">
    <property type="entry name" value="SIS_PGI_1"/>
    <property type="match status" value="1"/>
</dbReference>
<dbReference type="CDD" id="cd05016">
    <property type="entry name" value="SIS_PGI_2"/>
    <property type="match status" value="1"/>
</dbReference>
<dbReference type="FunFam" id="3.40.50.10490:FF:000015">
    <property type="entry name" value="Glucose-6-phosphate isomerase"/>
    <property type="match status" value="1"/>
</dbReference>
<dbReference type="FunFam" id="3.40.50.10490:FF:000016">
    <property type="entry name" value="Glucose-6-phosphate isomerase"/>
    <property type="match status" value="1"/>
</dbReference>
<dbReference type="FunFam" id="3.40.50.10490:FF:000020">
    <property type="entry name" value="Glucose-6-phosphate isomerase"/>
    <property type="match status" value="1"/>
</dbReference>
<dbReference type="Gene3D" id="3.40.50.10490">
    <property type="entry name" value="Glucose-6-phosphate isomerase like protein, domain 1"/>
    <property type="match status" value="3"/>
</dbReference>
<dbReference type="HAMAP" id="MF_00473">
    <property type="entry name" value="G6P_isomerase"/>
    <property type="match status" value="1"/>
</dbReference>
<dbReference type="InterPro" id="IPR001672">
    <property type="entry name" value="G6P_Isomerase"/>
</dbReference>
<dbReference type="InterPro" id="IPR018189">
    <property type="entry name" value="Phosphoglucose_isomerase_CS"/>
</dbReference>
<dbReference type="InterPro" id="IPR046348">
    <property type="entry name" value="SIS_dom_sf"/>
</dbReference>
<dbReference type="InterPro" id="IPR035476">
    <property type="entry name" value="SIS_PGI_1"/>
</dbReference>
<dbReference type="InterPro" id="IPR035482">
    <property type="entry name" value="SIS_PGI_2"/>
</dbReference>
<dbReference type="NCBIfam" id="NF010697">
    <property type="entry name" value="PRK14097.1"/>
    <property type="match status" value="1"/>
</dbReference>
<dbReference type="PANTHER" id="PTHR11469">
    <property type="entry name" value="GLUCOSE-6-PHOSPHATE ISOMERASE"/>
    <property type="match status" value="1"/>
</dbReference>
<dbReference type="PANTHER" id="PTHR11469:SF1">
    <property type="entry name" value="GLUCOSE-6-PHOSPHATE ISOMERASE"/>
    <property type="match status" value="1"/>
</dbReference>
<dbReference type="Pfam" id="PF00342">
    <property type="entry name" value="PGI"/>
    <property type="match status" value="1"/>
</dbReference>
<dbReference type="PRINTS" id="PR00662">
    <property type="entry name" value="G6PISOMERASE"/>
</dbReference>
<dbReference type="SUPFAM" id="SSF53697">
    <property type="entry name" value="SIS domain"/>
    <property type="match status" value="1"/>
</dbReference>
<dbReference type="PROSITE" id="PS00765">
    <property type="entry name" value="P_GLUCOSE_ISOMERASE_1"/>
    <property type="match status" value="1"/>
</dbReference>
<dbReference type="PROSITE" id="PS00174">
    <property type="entry name" value="P_GLUCOSE_ISOMERASE_2"/>
    <property type="match status" value="1"/>
</dbReference>
<dbReference type="PROSITE" id="PS51463">
    <property type="entry name" value="P_GLUCOSE_ISOMERASE_3"/>
    <property type="match status" value="1"/>
</dbReference>
<keyword id="KW-0963">Cytoplasm</keyword>
<keyword id="KW-0312">Gluconeogenesis</keyword>
<keyword id="KW-0324">Glycolysis</keyword>
<keyword id="KW-0413">Isomerase</keyword>
<keyword id="KW-0597">Phosphoprotein</keyword>
<reference key="1">
    <citation type="submission" date="2008-10" db="EMBL/GenBank/DDBJ databases">
        <title>Genome sequence of Bacillus cereus G9842.</title>
        <authorList>
            <person name="Dodson R.J."/>
            <person name="Durkin A.S."/>
            <person name="Rosovitz M.J."/>
            <person name="Rasko D.A."/>
            <person name="Hoffmaster A."/>
            <person name="Ravel J."/>
            <person name="Sutton G."/>
        </authorList>
    </citation>
    <scope>NUCLEOTIDE SEQUENCE [LARGE SCALE GENOMIC DNA]</scope>
    <source>
        <strain>G9842</strain>
    </source>
</reference>
<gene>
    <name evidence="1" type="primary">pgi</name>
    <name type="ordered locus">BCG9842_B0204</name>
</gene>
<evidence type="ECO:0000255" key="1">
    <source>
        <dbReference type="HAMAP-Rule" id="MF_00473"/>
    </source>
</evidence>
<protein>
    <recommendedName>
        <fullName evidence="1">Glucose-6-phosphate isomerase</fullName>
        <shortName evidence="1">GPI</shortName>
        <ecNumber evidence="1">5.3.1.9</ecNumber>
    </recommendedName>
    <alternativeName>
        <fullName evidence="1">Phosphoglucose isomerase</fullName>
        <shortName evidence="1">PGI</shortName>
    </alternativeName>
    <alternativeName>
        <fullName evidence="1">Phosphohexose isomerase</fullName>
        <shortName evidence="1">PHI</shortName>
    </alternativeName>
</protein>
<feature type="chain" id="PRO_1000125692" description="Glucose-6-phosphate isomerase">
    <location>
        <begin position="1"/>
        <end position="450"/>
    </location>
</feature>
<feature type="active site" description="Proton donor" evidence="1">
    <location>
        <position position="291"/>
    </location>
</feature>
<feature type="active site" evidence="1">
    <location>
        <position position="312"/>
    </location>
</feature>
<feature type="active site" evidence="1">
    <location>
        <position position="426"/>
    </location>
</feature>
<feature type="modified residue" description="Phosphothreonine" evidence="1">
    <location>
        <position position="39"/>
    </location>
</feature>
<proteinExistence type="inferred from homology"/>
<organism>
    <name type="scientific">Bacillus cereus (strain G9842)</name>
    <dbReference type="NCBI Taxonomy" id="405531"/>
    <lineage>
        <taxon>Bacteria</taxon>
        <taxon>Bacillati</taxon>
        <taxon>Bacillota</taxon>
        <taxon>Bacilli</taxon>
        <taxon>Bacillales</taxon>
        <taxon>Bacillaceae</taxon>
        <taxon>Bacillus</taxon>
        <taxon>Bacillus cereus group</taxon>
    </lineage>
</organism>
<name>G6PI_BACC2</name>
<comment type="function">
    <text evidence="1">Catalyzes the reversible isomerization of glucose-6-phosphate to fructose-6-phosphate.</text>
</comment>
<comment type="catalytic activity">
    <reaction evidence="1">
        <text>alpha-D-glucose 6-phosphate = beta-D-fructose 6-phosphate</text>
        <dbReference type="Rhea" id="RHEA:11816"/>
        <dbReference type="ChEBI" id="CHEBI:57634"/>
        <dbReference type="ChEBI" id="CHEBI:58225"/>
        <dbReference type="EC" id="5.3.1.9"/>
    </reaction>
</comment>
<comment type="pathway">
    <text evidence="1">Carbohydrate biosynthesis; gluconeogenesis.</text>
</comment>
<comment type="pathway">
    <text evidence="1">Carbohydrate degradation; glycolysis; D-glyceraldehyde 3-phosphate and glycerone phosphate from D-glucose: step 2/4.</text>
</comment>
<comment type="subcellular location">
    <subcellularLocation>
        <location evidence="1">Cytoplasm</location>
    </subcellularLocation>
</comment>
<comment type="similarity">
    <text evidence="1">Belongs to the GPI family.</text>
</comment>
<accession>B7IMR7</accession>